<dbReference type="EMBL" id="AF440571">
    <property type="protein sequence ID" value="AAL27759.1"/>
    <property type="molecule type" value="Genomic_DNA"/>
</dbReference>
<dbReference type="RefSeq" id="NP_445713.1">
    <property type="nucleotide sequence ID" value="NC_003214.2"/>
</dbReference>
<dbReference type="GeneID" id="922331"/>
<dbReference type="KEGG" id="vg:922331"/>
<dbReference type="Proteomes" id="UP000007017">
    <property type="component" value="Segment"/>
</dbReference>
<accession>Q914I2</accession>
<name>Y050_SIFVH</name>
<organism>
    <name type="scientific">Sulfolobus islandicus filamentous virus (isolate Iceland/Hveragerdi)</name>
    <name type="common">SIFV</name>
    <dbReference type="NCBI Taxonomy" id="654908"/>
    <lineage>
        <taxon>Viruses</taxon>
        <taxon>Adnaviria</taxon>
        <taxon>Zilligvirae</taxon>
        <taxon>Taleaviricota</taxon>
        <taxon>Tokiviricetes</taxon>
        <taxon>Ligamenvirales</taxon>
        <taxon>Lipothrixviridae</taxon>
        <taxon>Betalipothrixvirus</taxon>
        <taxon>Sulfolobus islandicus filamentous virus</taxon>
    </lineage>
</organism>
<protein>
    <recommendedName>
        <fullName>Uncharacterized protein 50</fullName>
    </recommendedName>
</protein>
<organismHost>
    <name type="scientific">Saccharolobus islandicus</name>
    <name type="common">Sulfolobus islandicus</name>
    <dbReference type="NCBI Taxonomy" id="43080"/>
</organismHost>
<reference key="1">
    <citation type="journal article" date="2000" name="Virology">
        <title>A novel lipothrixvirus, SIFV, of the extremely thermophilic crenarchaeon Sulfolobus.</title>
        <authorList>
            <person name="Arnold H.P."/>
            <person name="Zillig W."/>
            <person name="Ziese U."/>
            <person name="Holz I."/>
            <person name="Crosby M."/>
            <person name="Utterback T."/>
            <person name="Weidmann J.F."/>
            <person name="Umayam L.A."/>
            <person name="Teffera K."/>
            <person name="Kristjanson J.K."/>
            <person name="Klenk H.P."/>
            <person name="Nelson K.E."/>
            <person name="Fraser C.M."/>
        </authorList>
    </citation>
    <scope>NUCLEOTIDE SEQUENCE [GENOMIC DNA]</scope>
</reference>
<keyword id="KW-1185">Reference proteome</keyword>
<feature type="chain" id="PRO_0000385382" description="Uncharacterized protein 50">
    <location>
        <begin position="1"/>
        <end position="130"/>
    </location>
</feature>
<sequence>MSEPNQLTRDQMTEIVKNIVVSVDVNENAVVISAKRLLSYFLKNVEGLEKILKVDVDKDNSIVVYASVKPTNPNLKSIILKVAVKESAFNLSQFKHEIIKAGDDVNIKIYVQQNESRTLAKNSSEEEVDF</sequence>
<gene>
    <name type="primary">SIFV0050</name>
</gene>
<proteinExistence type="predicted"/>